<organism>
    <name type="scientific">Hydrogenovibrio crunogenus (strain DSM 25203 / XCL-2)</name>
    <name type="common">Thiomicrospira crunogena</name>
    <dbReference type="NCBI Taxonomy" id="317025"/>
    <lineage>
        <taxon>Bacteria</taxon>
        <taxon>Pseudomonadati</taxon>
        <taxon>Pseudomonadota</taxon>
        <taxon>Gammaproteobacteria</taxon>
        <taxon>Thiotrichales</taxon>
        <taxon>Piscirickettsiaceae</taxon>
        <taxon>Hydrogenovibrio</taxon>
    </lineage>
</organism>
<accession>Q31I96</accession>
<sequence length="197" mass="21459">MQSPVINELIDAFKLLPTIGPKSAQRLAYFLLQNHQQDGHRLASAIESALEKVGYCQQCRNLSETEICGFCASKSRQTDQLCIVETPTDVVAIEQSGIYKGQYFVLMGHLSPIDGIGPDELGLPILRDRLAQGEIQELILATNPTVEGEATAHYIQQMAIEFNISVTRLAQGIPLGGELEYIDSGTLGQAFAGRKAV</sequence>
<gene>
    <name evidence="1" type="primary">recR</name>
    <name type="ordered locus">Tcr_0531</name>
</gene>
<keyword id="KW-0227">DNA damage</keyword>
<keyword id="KW-0233">DNA recombination</keyword>
<keyword id="KW-0234">DNA repair</keyword>
<keyword id="KW-0479">Metal-binding</keyword>
<keyword id="KW-0862">Zinc</keyword>
<keyword id="KW-0863">Zinc-finger</keyword>
<evidence type="ECO:0000255" key="1">
    <source>
        <dbReference type="HAMAP-Rule" id="MF_00017"/>
    </source>
</evidence>
<dbReference type="EMBL" id="CP000109">
    <property type="protein sequence ID" value="ABB41127.1"/>
    <property type="molecule type" value="Genomic_DNA"/>
</dbReference>
<dbReference type="SMR" id="Q31I96"/>
<dbReference type="STRING" id="317025.Tcr_0531"/>
<dbReference type="KEGG" id="tcx:Tcr_0531"/>
<dbReference type="eggNOG" id="COG0353">
    <property type="taxonomic scope" value="Bacteria"/>
</dbReference>
<dbReference type="HOGENOM" id="CLU_060739_1_2_6"/>
<dbReference type="OrthoDB" id="9802672at2"/>
<dbReference type="GO" id="GO:0003677">
    <property type="term" value="F:DNA binding"/>
    <property type="evidence" value="ECO:0007669"/>
    <property type="project" value="UniProtKB-UniRule"/>
</dbReference>
<dbReference type="GO" id="GO:0008270">
    <property type="term" value="F:zinc ion binding"/>
    <property type="evidence" value="ECO:0007669"/>
    <property type="project" value="UniProtKB-KW"/>
</dbReference>
<dbReference type="GO" id="GO:0006310">
    <property type="term" value="P:DNA recombination"/>
    <property type="evidence" value="ECO:0007669"/>
    <property type="project" value="UniProtKB-UniRule"/>
</dbReference>
<dbReference type="GO" id="GO:0006281">
    <property type="term" value="P:DNA repair"/>
    <property type="evidence" value="ECO:0007669"/>
    <property type="project" value="UniProtKB-UniRule"/>
</dbReference>
<dbReference type="CDD" id="cd01025">
    <property type="entry name" value="TOPRIM_recR"/>
    <property type="match status" value="1"/>
</dbReference>
<dbReference type="FunFam" id="3.40.1360.10:FF:000001">
    <property type="entry name" value="Recombination protein RecR"/>
    <property type="match status" value="1"/>
</dbReference>
<dbReference type="Gene3D" id="3.40.1360.10">
    <property type="match status" value="1"/>
</dbReference>
<dbReference type="Gene3D" id="6.10.250.240">
    <property type="match status" value="1"/>
</dbReference>
<dbReference type="Gene3D" id="1.10.8.420">
    <property type="entry name" value="RecR Domain 1"/>
    <property type="match status" value="1"/>
</dbReference>
<dbReference type="HAMAP" id="MF_00017">
    <property type="entry name" value="RecR"/>
    <property type="match status" value="1"/>
</dbReference>
<dbReference type="InterPro" id="IPR000093">
    <property type="entry name" value="DNA_Rcmb_RecR"/>
</dbReference>
<dbReference type="InterPro" id="IPR023627">
    <property type="entry name" value="Rcmb_RecR"/>
</dbReference>
<dbReference type="InterPro" id="IPR015967">
    <property type="entry name" value="Rcmb_RecR_Znf"/>
</dbReference>
<dbReference type="InterPro" id="IPR006171">
    <property type="entry name" value="TOPRIM_dom"/>
</dbReference>
<dbReference type="InterPro" id="IPR034137">
    <property type="entry name" value="TOPRIM_RecR"/>
</dbReference>
<dbReference type="NCBIfam" id="TIGR00615">
    <property type="entry name" value="recR"/>
    <property type="match status" value="1"/>
</dbReference>
<dbReference type="PANTHER" id="PTHR30446">
    <property type="entry name" value="RECOMBINATION PROTEIN RECR"/>
    <property type="match status" value="1"/>
</dbReference>
<dbReference type="PANTHER" id="PTHR30446:SF0">
    <property type="entry name" value="RECOMBINATION PROTEIN RECR"/>
    <property type="match status" value="1"/>
</dbReference>
<dbReference type="Pfam" id="PF21175">
    <property type="entry name" value="RecR_C"/>
    <property type="match status" value="1"/>
</dbReference>
<dbReference type="Pfam" id="PF21176">
    <property type="entry name" value="RecR_HhH"/>
    <property type="match status" value="1"/>
</dbReference>
<dbReference type="Pfam" id="PF02132">
    <property type="entry name" value="RecR_ZnF"/>
    <property type="match status" value="1"/>
</dbReference>
<dbReference type="Pfam" id="PF13662">
    <property type="entry name" value="Toprim_4"/>
    <property type="match status" value="1"/>
</dbReference>
<dbReference type="SMART" id="SM00493">
    <property type="entry name" value="TOPRIM"/>
    <property type="match status" value="1"/>
</dbReference>
<dbReference type="SUPFAM" id="SSF111304">
    <property type="entry name" value="Recombination protein RecR"/>
    <property type="match status" value="1"/>
</dbReference>
<dbReference type="PROSITE" id="PS01300">
    <property type="entry name" value="RECR"/>
    <property type="match status" value="1"/>
</dbReference>
<dbReference type="PROSITE" id="PS50880">
    <property type="entry name" value="TOPRIM"/>
    <property type="match status" value="1"/>
</dbReference>
<protein>
    <recommendedName>
        <fullName evidence="1">Recombination protein RecR</fullName>
    </recommendedName>
</protein>
<proteinExistence type="inferred from homology"/>
<feature type="chain" id="PRO_1000001635" description="Recombination protein RecR">
    <location>
        <begin position="1"/>
        <end position="197"/>
    </location>
</feature>
<feature type="domain" description="Toprim" evidence="1">
    <location>
        <begin position="79"/>
        <end position="174"/>
    </location>
</feature>
<feature type="zinc finger region" description="C4-type" evidence="1">
    <location>
        <begin position="56"/>
        <end position="71"/>
    </location>
</feature>
<reference key="1">
    <citation type="journal article" date="2006" name="PLoS Biol.">
        <title>The genome of deep-sea vent chemolithoautotroph Thiomicrospira crunogena XCL-2.</title>
        <authorList>
            <person name="Scott K.M."/>
            <person name="Sievert S.M."/>
            <person name="Abril F.N."/>
            <person name="Ball L.A."/>
            <person name="Barrett C.J."/>
            <person name="Blake R.A."/>
            <person name="Boller A.J."/>
            <person name="Chain P.S.G."/>
            <person name="Clark J.A."/>
            <person name="Davis C.R."/>
            <person name="Detter C."/>
            <person name="Do K.F."/>
            <person name="Dobrinski K.P."/>
            <person name="Faza B.I."/>
            <person name="Fitzpatrick K.A."/>
            <person name="Freyermuth S.K."/>
            <person name="Harmer T.L."/>
            <person name="Hauser L.J."/>
            <person name="Huegler M."/>
            <person name="Kerfeld C.A."/>
            <person name="Klotz M.G."/>
            <person name="Kong W.W."/>
            <person name="Land M."/>
            <person name="Lapidus A."/>
            <person name="Larimer F.W."/>
            <person name="Longo D.L."/>
            <person name="Lucas S."/>
            <person name="Malfatti S.A."/>
            <person name="Massey S.E."/>
            <person name="Martin D.D."/>
            <person name="McCuddin Z."/>
            <person name="Meyer F."/>
            <person name="Moore J.L."/>
            <person name="Ocampo L.H. Jr."/>
            <person name="Paul J.H."/>
            <person name="Paulsen I.T."/>
            <person name="Reep D.K."/>
            <person name="Ren Q."/>
            <person name="Ross R.L."/>
            <person name="Sato P.Y."/>
            <person name="Thomas P."/>
            <person name="Tinkham L.E."/>
            <person name="Zeruth G.T."/>
        </authorList>
    </citation>
    <scope>NUCLEOTIDE SEQUENCE [LARGE SCALE GENOMIC DNA]</scope>
    <source>
        <strain>DSM 25203 / XCL-2</strain>
    </source>
</reference>
<comment type="function">
    <text evidence="1">May play a role in DNA repair. It seems to be involved in an RecBC-independent recombinational process of DNA repair. It may act with RecF and RecO.</text>
</comment>
<comment type="similarity">
    <text evidence="1">Belongs to the RecR family.</text>
</comment>
<name>RECR_HYDCU</name>